<protein>
    <recommendedName>
        <fullName evidence="1">Imidazoleglycerol-phosphate dehydratase</fullName>
        <shortName evidence="1">IGPD</shortName>
        <ecNumber evidence="1">4.2.1.19</ecNumber>
    </recommendedName>
</protein>
<comment type="catalytic activity">
    <reaction evidence="1">
        <text>D-erythro-1-(imidazol-4-yl)glycerol 3-phosphate = 3-(imidazol-4-yl)-2-oxopropyl phosphate + H2O</text>
        <dbReference type="Rhea" id="RHEA:11040"/>
        <dbReference type="ChEBI" id="CHEBI:15377"/>
        <dbReference type="ChEBI" id="CHEBI:57766"/>
        <dbReference type="ChEBI" id="CHEBI:58278"/>
        <dbReference type="EC" id="4.2.1.19"/>
    </reaction>
</comment>
<comment type="pathway">
    <text evidence="1">Amino-acid biosynthesis; L-histidine biosynthesis; L-histidine from 5-phospho-alpha-D-ribose 1-diphosphate: step 6/9.</text>
</comment>
<comment type="subcellular location">
    <subcellularLocation>
        <location evidence="1">Cytoplasm</location>
    </subcellularLocation>
</comment>
<comment type="similarity">
    <text evidence="1">Belongs to the imidazoleglycerol-phosphate dehydratase family.</text>
</comment>
<keyword id="KW-0028">Amino-acid biosynthesis</keyword>
<keyword id="KW-0963">Cytoplasm</keyword>
<keyword id="KW-0368">Histidine biosynthesis</keyword>
<keyword id="KW-0456">Lyase</keyword>
<evidence type="ECO:0000255" key="1">
    <source>
        <dbReference type="HAMAP-Rule" id="MF_00076"/>
    </source>
</evidence>
<sequence>MRESSQIRETTETKIKLSLQLDEGKNVSVQTGVGFFDHMLTLFARHGRFGLQVEAEGDVFVDAHHTVEDVGIVLGNCLKEALQNKEGINRYGSAYVPMDESLGFVAIDISGRSYIVFQGELTNPKLGDFDTELTEEFFRAVAHAANITLHARILYGSNTHHKIEALFKAFGRALREAVERNAHITGVNSTKGML</sequence>
<organism>
    <name type="scientific">Bacillus anthracis (strain CDC 684 / NRRL 3495)</name>
    <dbReference type="NCBI Taxonomy" id="568206"/>
    <lineage>
        <taxon>Bacteria</taxon>
        <taxon>Bacillati</taxon>
        <taxon>Bacillota</taxon>
        <taxon>Bacilli</taxon>
        <taxon>Bacillales</taxon>
        <taxon>Bacillaceae</taxon>
        <taxon>Bacillus</taxon>
        <taxon>Bacillus cereus group</taxon>
    </lineage>
</organism>
<name>HIS7_BACAC</name>
<feature type="chain" id="PRO_1000118213" description="Imidazoleglycerol-phosphate dehydratase">
    <location>
        <begin position="1"/>
        <end position="194"/>
    </location>
</feature>
<gene>
    <name evidence="1" type="primary">hisB</name>
    <name type="ordered locus">BAMEG_3168</name>
</gene>
<reference key="1">
    <citation type="submission" date="2008-10" db="EMBL/GenBank/DDBJ databases">
        <title>Genome sequence of Bacillus anthracis str. CDC 684.</title>
        <authorList>
            <person name="Dodson R.J."/>
            <person name="Munk A.C."/>
            <person name="Brettin T."/>
            <person name="Bruce D."/>
            <person name="Detter C."/>
            <person name="Tapia R."/>
            <person name="Han C."/>
            <person name="Sutton G."/>
            <person name="Sims D."/>
        </authorList>
    </citation>
    <scope>NUCLEOTIDE SEQUENCE [LARGE SCALE GENOMIC DNA]</scope>
    <source>
        <strain>CDC 684 / NRRL 3495</strain>
    </source>
</reference>
<accession>C3L9Q0</accession>
<proteinExistence type="inferred from homology"/>
<dbReference type="EC" id="4.2.1.19" evidence="1"/>
<dbReference type="EMBL" id="CP001215">
    <property type="protein sequence ID" value="ACP15322.1"/>
    <property type="molecule type" value="Genomic_DNA"/>
</dbReference>
<dbReference type="RefSeq" id="WP_001209295.1">
    <property type="nucleotide sequence ID" value="NC_012581.1"/>
</dbReference>
<dbReference type="SMR" id="C3L9Q0"/>
<dbReference type="GeneID" id="45021406"/>
<dbReference type="KEGG" id="bah:BAMEG_3168"/>
<dbReference type="HOGENOM" id="CLU_044308_3_0_9"/>
<dbReference type="UniPathway" id="UPA00031">
    <property type="reaction ID" value="UER00011"/>
</dbReference>
<dbReference type="GO" id="GO:0005737">
    <property type="term" value="C:cytoplasm"/>
    <property type="evidence" value="ECO:0007669"/>
    <property type="project" value="UniProtKB-SubCell"/>
</dbReference>
<dbReference type="GO" id="GO:0004424">
    <property type="term" value="F:imidazoleglycerol-phosphate dehydratase activity"/>
    <property type="evidence" value="ECO:0007669"/>
    <property type="project" value="UniProtKB-UniRule"/>
</dbReference>
<dbReference type="GO" id="GO:0000105">
    <property type="term" value="P:L-histidine biosynthetic process"/>
    <property type="evidence" value="ECO:0007669"/>
    <property type="project" value="UniProtKB-UniRule"/>
</dbReference>
<dbReference type="CDD" id="cd07914">
    <property type="entry name" value="IGPD"/>
    <property type="match status" value="1"/>
</dbReference>
<dbReference type="FunFam" id="3.30.230.40:FF:000001">
    <property type="entry name" value="Imidazoleglycerol-phosphate dehydratase HisB"/>
    <property type="match status" value="1"/>
</dbReference>
<dbReference type="FunFam" id="3.30.230.40:FF:000003">
    <property type="entry name" value="Imidazoleglycerol-phosphate dehydratase HisB"/>
    <property type="match status" value="1"/>
</dbReference>
<dbReference type="Gene3D" id="3.30.230.40">
    <property type="entry name" value="Imidazole glycerol phosphate dehydratase, domain 1"/>
    <property type="match status" value="2"/>
</dbReference>
<dbReference type="HAMAP" id="MF_00076">
    <property type="entry name" value="HisB"/>
    <property type="match status" value="1"/>
</dbReference>
<dbReference type="InterPro" id="IPR038494">
    <property type="entry name" value="IGPD_sf"/>
</dbReference>
<dbReference type="InterPro" id="IPR000807">
    <property type="entry name" value="ImidazoleglycerolP_deHydtase"/>
</dbReference>
<dbReference type="InterPro" id="IPR020565">
    <property type="entry name" value="ImidazoleglycerP_deHydtase_CS"/>
</dbReference>
<dbReference type="InterPro" id="IPR020568">
    <property type="entry name" value="Ribosomal_Su5_D2-typ_SF"/>
</dbReference>
<dbReference type="NCBIfam" id="NF002107">
    <property type="entry name" value="PRK00951.1-2"/>
    <property type="match status" value="1"/>
</dbReference>
<dbReference type="NCBIfam" id="NF002111">
    <property type="entry name" value="PRK00951.2-1"/>
    <property type="match status" value="1"/>
</dbReference>
<dbReference type="NCBIfam" id="NF002114">
    <property type="entry name" value="PRK00951.2-4"/>
    <property type="match status" value="1"/>
</dbReference>
<dbReference type="PANTHER" id="PTHR23133:SF2">
    <property type="entry name" value="IMIDAZOLEGLYCEROL-PHOSPHATE DEHYDRATASE"/>
    <property type="match status" value="1"/>
</dbReference>
<dbReference type="PANTHER" id="PTHR23133">
    <property type="entry name" value="IMIDAZOLEGLYCEROL-PHOSPHATE DEHYDRATASE HIS7"/>
    <property type="match status" value="1"/>
</dbReference>
<dbReference type="Pfam" id="PF00475">
    <property type="entry name" value="IGPD"/>
    <property type="match status" value="1"/>
</dbReference>
<dbReference type="SUPFAM" id="SSF54211">
    <property type="entry name" value="Ribosomal protein S5 domain 2-like"/>
    <property type="match status" value="2"/>
</dbReference>
<dbReference type="PROSITE" id="PS00954">
    <property type="entry name" value="IGP_DEHYDRATASE_1"/>
    <property type="match status" value="1"/>
</dbReference>
<dbReference type="PROSITE" id="PS00955">
    <property type="entry name" value="IGP_DEHYDRATASE_2"/>
    <property type="match status" value="1"/>
</dbReference>